<gene>
    <name evidence="1" type="primary">gcvH3</name>
    <name type="ordered locus">STK_18940</name>
</gene>
<proteinExistence type="inferred from homology"/>
<comment type="function">
    <text evidence="1">The glycine cleavage system catalyzes the degradation of glycine. The H protein shuttles the methylamine group of glycine from the P protein to the T protein.</text>
</comment>
<comment type="cofactor">
    <cofactor evidence="1">
        <name>(R)-lipoate</name>
        <dbReference type="ChEBI" id="CHEBI:83088"/>
    </cofactor>
    <text evidence="1">Binds 1 lipoyl cofactor covalently.</text>
</comment>
<comment type="subunit">
    <text evidence="1">The glycine cleavage system is composed of four proteins: P, T, L and H.</text>
</comment>
<comment type="similarity">
    <text evidence="1">Belongs to the GcvH family.</text>
</comment>
<reference key="1">
    <citation type="journal article" date="2001" name="DNA Res.">
        <title>Complete genome sequence of an aerobic thermoacidophilic Crenarchaeon, Sulfolobus tokodaii strain7.</title>
        <authorList>
            <person name="Kawarabayasi Y."/>
            <person name="Hino Y."/>
            <person name="Horikawa H."/>
            <person name="Jin-no K."/>
            <person name="Takahashi M."/>
            <person name="Sekine M."/>
            <person name="Baba S."/>
            <person name="Ankai A."/>
            <person name="Kosugi H."/>
            <person name="Hosoyama A."/>
            <person name="Fukui S."/>
            <person name="Nagai Y."/>
            <person name="Nishijima K."/>
            <person name="Otsuka R."/>
            <person name="Nakazawa H."/>
            <person name="Takamiya M."/>
            <person name="Kato Y."/>
            <person name="Yoshizawa T."/>
            <person name="Tanaka T."/>
            <person name="Kudoh Y."/>
            <person name="Yamazaki J."/>
            <person name="Kushida N."/>
            <person name="Oguchi A."/>
            <person name="Aoki K."/>
            <person name="Masuda S."/>
            <person name="Yanagii M."/>
            <person name="Nishimura M."/>
            <person name="Yamagishi A."/>
            <person name="Oshima T."/>
            <person name="Kikuchi H."/>
        </authorList>
    </citation>
    <scope>NUCLEOTIDE SEQUENCE [LARGE SCALE GENOMIC DNA]</scope>
    <source>
        <strain>DSM 16993 / JCM 10545 / NBRC 100140 / 7</strain>
    </source>
</reference>
<feature type="chain" id="PRO_0000166287" description="Probable glycine cleavage system H protein 3">
    <location>
        <begin position="1"/>
        <end position="136"/>
    </location>
</feature>
<feature type="domain" description="Lipoyl-binding" evidence="2">
    <location>
        <begin position="28"/>
        <end position="109"/>
    </location>
</feature>
<feature type="modified residue" description="N6-lipoyllysine" evidence="1">
    <location>
        <position position="69"/>
    </location>
</feature>
<name>GCSH3_SULTO</name>
<organism>
    <name type="scientific">Sulfurisphaera tokodaii (strain DSM 16993 / JCM 10545 / NBRC 100140 / 7)</name>
    <name type="common">Sulfolobus tokodaii</name>
    <dbReference type="NCBI Taxonomy" id="273063"/>
    <lineage>
        <taxon>Archaea</taxon>
        <taxon>Thermoproteota</taxon>
        <taxon>Thermoprotei</taxon>
        <taxon>Sulfolobales</taxon>
        <taxon>Sulfolobaceae</taxon>
        <taxon>Sulfurisphaera</taxon>
    </lineage>
</organism>
<dbReference type="EMBL" id="BA000023">
    <property type="protein sequence ID" value="BAB66988.1"/>
    <property type="molecule type" value="Genomic_DNA"/>
</dbReference>
<dbReference type="RefSeq" id="WP_010979965.1">
    <property type="nucleotide sequence ID" value="NC_003106.2"/>
</dbReference>
<dbReference type="SMR" id="Q96ZD7"/>
<dbReference type="STRING" id="273063.STK_18940"/>
<dbReference type="KEGG" id="sto:STK_18940"/>
<dbReference type="PATRIC" id="fig|273063.9.peg.2155"/>
<dbReference type="eggNOG" id="arCOG01303">
    <property type="taxonomic scope" value="Archaea"/>
</dbReference>
<dbReference type="OrthoDB" id="9810at2157"/>
<dbReference type="Proteomes" id="UP000001015">
    <property type="component" value="Chromosome"/>
</dbReference>
<dbReference type="GO" id="GO:0005737">
    <property type="term" value="C:cytoplasm"/>
    <property type="evidence" value="ECO:0007669"/>
    <property type="project" value="TreeGrafter"/>
</dbReference>
<dbReference type="GO" id="GO:0005960">
    <property type="term" value="C:glycine cleavage complex"/>
    <property type="evidence" value="ECO:0007669"/>
    <property type="project" value="InterPro"/>
</dbReference>
<dbReference type="GO" id="GO:0019464">
    <property type="term" value="P:glycine decarboxylation via glycine cleavage system"/>
    <property type="evidence" value="ECO:0007669"/>
    <property type="project" value="UniProtKB-UniRule"/>
</dbReference>
<dbReference type="CDD" id="cd06848">
    <property type="entry name" value="GCS_H"/>
    <property type="match status" value="1"/>
</dbReference>
<dbReference type="Gene3D" id="2.40.50.100">
    <property type="match status" value="1"/>
</dbReference>
<dbReference type="HAMAP" id="MF_00272">
    <property type="entry name" value="GcvH"/>
    <property type="match status" value="1"/>
</dbReference>
<dbReference type="InterPro" id="IPR003016">
    <property type="entry name" value="2-oxoA_DH_lipoyl-BS"/>
</dbReference>
<dbReference type="InterPro" id="IPR000089">
    <property type="entry name" value="Biotin_lipoyl"/>
</dbReference>
<dbReference type="InterPro" id="IPR002930">
    <property type="entry name" value="GCV_H"/>
</dbReference>
<dbReference type="InterPro" id="IPR033753">
    <property type="entry name" value="GCV_H/Fam206"/>
</dbReference>
<dbReference type="InterPro" id="IPR011053">
    <property type="entry name" value="Single_hybrid_motif"/>
</dbReference>
<dbReference type="PANTHER" id="PTHR11715">
    <property type="entry name" value="GLYCINE CLEAVAGE SYSTEM H PROTEIN"/>
    <property type="match status" value="1"/>
</dbReference>
<dbReference type="PANTHER" id="PTHR11715:SF3">
    <property type="entry name" value="GLYCINE CLEAVAGE SYSTEM H PROTEIN-RELATED"/>
    <property type="match status" value="1"/>
</dbReference>
<dbReference type="Pfam" id="PF01597">
    <property type="entry name" value="GCV_H"/>
    <property type="match status" value="1"/>
</dbReference>
<dbReference type="SUPFAM" id="SSF51230">
    <property type="entry name" value="Single hybrid motif"/>
    <property type="match status" value="1"/>
</dbReference>
<dbReference type="PROSITE" id="PS50968">
    <property type="entry name" value="BIOTINYL_LIPOYL"/>
    <property type="match status" value="1"/>
</dbReference>
<dbReference type="PROSITE" id="PS00189">
    <property type="entry name" value="LIPOYL"/>
    <property type="match status" value="1"/>
</dbReference>
<accession>Q96ZD7</accession>
<sequence length="136" mass="15605">MQVEGFEFPDELYYYPEEHVWVKIEGDMVTVGITSLGQYMAGKIFQVTTKNKGEKVTPKSVIFTLESAKWIGKFRLPVEGEIVDINDEVVKNPTLINEKPYDAWIVKIKGDIKKEKLLPVSEAVKIFENDAKRVIR</sequence>
<protein>
    <recommendedName>
        <fullName evidence="1">Probable glycine cleavage system H protein 3</fullName>
    </recommendedName>
</protein>
<evidence type="ECO:0000255" key="1">
    <source>
        <dbReference type="HAMAP-Rule" id="MF_00272"/>
    </source>
</evidence>
<evidence type="ECO:0000255" key="2">
    <source>
        <dbReference type="PROSITE-ProRule" id="PRU01066"/>
    </source>
</evidence>
<keyword id="KW-0450">Lipoyl</keyword>
<keyword id="KW-1185">Reference proteome</keyword>